<gene>
    <name type="primary">ND5</name>
    <name type="synonym">NAD5</name>
</gene>
<reference key="1">
    <citation type="journal article" date="2008" name="FEMS Yeast Res.">
        <title>Promiscuous DNA in the nuclear genomes of hemiascomycetous yeasts.</title>
        <authorList>
            <person name="Sacerdot C."/>
            <person name="Casaregola S."/>
            <person name="Lafontaine I."/>
            <person name="Tekaia F."/>
            <person name="Dujon B."/>
            <person name="Ozier-Kalogeropoulos O."/>
        </authorList>
    </citation>
    <scope>NUCLEOTIDE SEQUENCE [LARGE SCALE GENOMIC DNA]</scope>
    <source>
        <strain>ATCC 36239 / CBS 767 / BCRC 21394 / JCM 1990 / NBRC 0083 / IGC 2968</strain>
    </source>
</reference>
<organism>
    <name type="scientific">Debaryomyces hansenii (strain ATCC 36239 / CBS 767 / BCRC 21394 / JCM 1990 / NBRC 0083 / IGC 2968)</name>
    <name type="common">Yeast</name>
    <name type="synonym">Torulaspora hansenii</name>
    <dbReference type="NCBI Taxonomy" id="284592"/>
    <lineage>
        <taxon>Eukaryota</taxon>
        <taxon>Fungi</taxon>
        <taxon>Dikarya</taxon>
        <taxon>Ascomycota</taxon>
        <taxon>Saccharomycotina</taxon>
        <taxon>Pichiomycetes</taxon>
        <taxon>Debaryomycetaceae</taxon>
        <taxon>Debaryomyces</taxon>
    </lineage>
</organism>
<geneLocation type="mitochondrion"/>
<feature type="chain" id="PRO_0000355054" description="NADH-ubiquinone oxidoreductase chain 5">
    <location>
        <begin position="1"/>
        <end position="592"/>
    </location>
</feature>
<feature type="transmembrane region" description="Helical" evidence="2">
    <location>
        <begin position="36"/>
        <end position="56"/>
    </location>
</feature>
<feature type="transmembrane region" description="Helical" evidence="2">
    <location>
        <begin position="68"/>
        <end position="88"/>
    </location>
</feature>
<feature type="transmembrane region" description="Helical" evidence="2">
    <location>
        <begin position="89"/>
        <end position="109"/>
    </location>
</feature>
<feature type="transmembrane region" description="Helical" evidence="2">
    <location>
        <begin position="132"/>
        <end position="152"/>
    </location>
</feature>
<feature type="transmembrane region" description="Helical" evidence="2">
    <location>
        <begin position="169"/>
        <end position="189"/>
    </location>
</feature>
<feature type="transmembrane region" description="Helical" evidence="2">
    <location>
        <begin position="196"/>
        <end position="216"/>
    </location>
</feature>
<feature type="transmembrane region" description="Helical" evidence="2">
    <location>
        <begin position="229"/>
        <end position="249"/>
    </location>
</feature>
<feature type="transmembrane region" description="Helical" evidence="2">
    <location>
        <begin position="256"/>
        <end position="276"/>
    </location>
</feature>
<feature type="transmembrane region" description="Helical" evidence="2">
    <location>
        <begin position="279"/>
        <end position="299"/>
    </location>
</feature>
<feature type="transmembrane region" description="Helical" evidence="2">
    <location>
        <begin position="322"/>
        <end position="342"/>
    </location>
</feature>
<feature type="transmembrane region" description="Helical" evidence="2">
    <location>
        <begin position="364"/>
        <end position="386"/>
    </location>
</feature>
<feature type="transmembrane region" description="Helical" evidence="2">
    <location>
        <begin position="406"/>
        <end position="426"/>
    </location>
</feature>
<feature type="transmembrane region" description="Helical" evidence="2">
    <location>
        <begin position="451"/>
        <end position="471"/>
    </location>
</feature>
<feature type="transmembrane region" description="Helical" evidence="2">
    <location>
        <begin position="534"/>
        <end position="554"/>
    </location>
</feature>
<keyword id="KW-0249">Electron transport</keyword>
<keyword id="KW-0472">Membrane</keyword>
<keyword id="KW-0496">Mitochondrion</keyword>
<keyword id="KW-0999">Mitochondrion inner membrane</keyword>
<keyword id="KW-0520">NAD</keyword>
<keyword id="KW-1185">Reference proteome</keyword>
<keyword id="KW-0679">Respiratory chain</keyword>
<keyword id="KW-1278">Translocase</keyword>
<keyword id="KW-0812">Transmembrane</keyword>
<keyword id="KW-1133">Transmembrane helix</keyword>
<keyword id="KW-0813">Transport</keyword>
<keyword id="KW-0830">Ubiquinone</keyword>
<evidence type="ECO:0000250" key="1"/>
<evidence type="ECO:0000255" key="2"/>
<evidence type="ECO:0000305" key="3"/>
<comment type="function">
    <text evidence="1">Core subunit of the mitochondrial membrane respiratory chain NADH dehydrogenase (Complex I) that is believed to belong to the minimal assembly required for catalysis. Complex I functions in the transfer of electrons from NADH to the respiratory chain. The immediate electron acceptor for the enzyme is believed to be ubiquinone (By similarity).</text>
</comment>
<comment type="catalytic activity">
    <reaction>
        <text>a ubiquinone + NADH + 5 H(+)(in) = a ubiquinol + NAD(+) + 4 H(+)(out)</text>
        <dbReference type="Rhea" id="RHEA:29091"/>
        <dbReference type="Rhea" id="RHEA-COMP:9565"/>
        <dbReference type="Rhea" id="RHEA-COMP:9566"/>
        <dbReference type="ChEBI" id="CHEBI:15378"/>
        <dbReference type="ChEBI" id="CHEBI:16389"/>
        <dbReference type="ChEBI" id="CHEBI:17976"/>
        <dbReference type="ChEBI" id="CHEBI:57540"/>
        <dbReference type="ChEBI" id="CHEBI:57945"/>
        <dbReference type="EC" id="7.1.1.2"/>
    </reaction>
</comment>
<comment type="subcellular location">
    <subcellularLocation>
        <location evidence="1">Mitochondrion inner membrane</location>
        <topology evidence="1">Multi-pass membrane protein</topology>
    </subcellularLocation>
</comment>
<comment type="similarity">
    <text evidence="3">Belongs to the complex I subunit 5 family.</text>
</comment>
<dbReference type="EC" id="7.1.1.2"/>
<dbReference type="EMBL" id="DQ508940">
    <property type="protein sequence ID" value="ABF58071.1"/>
    <property type="molecule type" value="Genomic_DNA"/>
</dbReference>
<dbReference type="RefSeq" id="YP_001621422.1">
    <property type="nucleotide sequence ID" value="NC_010166.1"/>
</dbReference>
<dbReference type="SMR" id="A9RAH0"/>
<dbReference type="STRING" id="284592.A9RAH0"/>
<dbReference type="GeneID" id="5845848"/>
<dbReference type="KEGG" id="dha:ND5"/>
<dbReference type="InParanoid" id="A9RAH0"/>
<dbReference type="Proteomes" id="UP000000599">
    <property type="component" value="Mitochondrion"/>
</dbReference>
<dbReference type="GO" id="GO:0005743">
    <property type="term" value="C:mitochondrial inner membrane"/>
    <property type="evidence" value="ECO:0007669"/>
    <property type="project" value="UniProtKB-SubCell"/>
</dbReference>
<dbReference type="GO" id="GO:0008137">
    <property type="term" value="F:NADH dehydrogenase (ubiquinone) activity"/>
    <property type="evidence" value="ECO:0007669"/>
    <property type="project" value="UniProtKB-EC"/>
</dbReference>
<dbReference type="GO" id="GO:0042773">
    <property type="term" value="P:ATP synthesis coupled electron transport"/>
    <property type="evidence" value="ECO:0007669"/>
    <property type="project" value="InterPro"/>
</dbReference>
<dbReference type="GO" id="GO:0015990">
    <property type="term" value="P:electron transport coupled proton transport"/>
    <property type="evidence" value="ECO:0007669"/>
    <property type="project" value="TreeGrafter"/>
</dbReference>
<dbReference type="InterPro" id="IPR018393">
    <property type="entry name" value="NADHpl_OxRdtase_5_subgr"/>
</dbReference>
<dbReference type="InterPro" id="IPR001750">
    <property type="entry name" value="ND/Mrp_TM"/>
</dbReference>
<dbReference type="InterPro" id="IPR003945">
    <property type="entry name" value="NU5C-like"/>
</dbReference>
<dbReference type="InterPro" id="IPR001516">
    <property type="entry name" value="Proton_antipo_N"/>
</dbReference>
<dbReference type="NCBIfam" id="TIGR01974">
    <property type="entry name" value="NDH_I_L"/>
    <property type="match status" value="1"/>
</dbReference>
<dbReference type="PANTHER" id="PTHR42829">
    <property type="entry name" value="NADH-UBIQUINONE OXIDOREDUCTASE CHAIN 5"/>
    <property type="match status" value="1"/>
</dbReference>
<dbReference type="PANTHER" id="PTHR42829:SF2">
    <property type="entry name" value="NADH-UBIQUINONE OXIDOREDUCTASE CHAIN 5"/>
    <property type="match status" value="1"/>
</dbReference>
<dbReference type="Pfam" id="PF00361">
    <property type="entry name" value="Proton_antipo_M"/>
    <property type="match status" value="1"/>
</dbReference>
<dbReference type="Pfam" id="PF00662">
    <property type="entry name" value="Proton_antipo_N"/>
    <property type="match status" value="1"/>
</dbReference>
<dbReference type="PRINTS" id="PR01434">
    <property type="entry name" value="NADHDHGNASE5"/>
</dbReference>
<sequence>MAWLIYFFEEPISIHLGTWFSVGDIQVNYGTLLDSLSMVVMVPVGIVTLSVLIYAIDYMRYDPNRNRFYIILSVFAIFMTVLVISDNYIMMFMGWEFVGVVSYLLISFWNTRIAAMKSALSAILLNRMGDTLFVICIGTMLSYFHAVDFETMELMTPHTDTYMLNLMAMMLLMAATAKSAQLGLHGWLLSAMEGPTPVSALTHAATMVCSGVFVLVRSSFMLEYTPSMLLVMLWLAGFTTLMSGLMAVVSNDMKRVMALSTMSQLAMMMLAMGSSAYDLAMYHLYCHAFFKALLFMSAGSIMHSYMSETQDMRKYGGLINYLPFSYTTMLMASLSLMAMPGLTGYYSKDIIMESLYGTYTVSGYIMYYIATASATLTAIYSLRVTYLTFYNVPRSNKYTFAHVHESTHMAMPMFILTIYSMFLGYARDNVTFHLVMGLPHTNSFIETEYTLPAMFKLLPLMLGLSLSLTTVYMYEFTYKMSKSSVYNYFNQRIYYDQLTNNLIMRPVLKLGGATNAYTDNGLLRVLGSTGMSRALINIPVLLMMNMTYTFIVFFTYMKYFYIIPATRGRKLYMILYTKCMINIFHTPEAGII</sequence>
<name>NU5M_DEBHA</name>
<proteinExistence type="inferred from homology"/>
<protein>
    <recommendedName>
        <fullName>NADH-ubiquinone oxidoreductase chain 5</fullName>
        <ecNumber>7.1.1.2</ecNumber>
    </recommendedName>
    <alternativeName>
        <fullName>NADH dehydrogenase subunit 5</fullName>
    </alternativeName>
</protein>
<accession>A9RAH0</accession>